<comment type="function">
    <text evidence="1">Accelerates the degradation of transcripts by removing pyrophosphate from the 5'-end of triphosphorylated RNA, leading to a more labile monophosphorylated state that can stimulate subsequent ribonuclease cleavage.</text>
</comment>
<comment type="cofactor">
    <cofactor evidence="1">
        <name>a divalent metal cation</name>
        <dbReference type="ChEBI" id="CHEBI:60240"/>
    </cofactor>
</comment>
<comment type="similarity">
    <text evidence="1">Belongs to the Nudix hydrolase family. RppH subfamily.</text>
</comment>
<keyword id="KW-0378">Hydrolase</keyword>
<evidence type="ECO:0000255" key="1">
    <source>
        <dbReference type="HAMAP-Rule" id="MF_00298"/>
    </source>
</evidence>
<gene>
    <name evidence="1" type="primary">rppH</name>
    <name evidence="1" type="synonym">nudH</name>
    <name type="ordered locus">SeD_A3331</name>
</gene>
<accession>B5FUB2</accession>
<name>RPPH_SALDC</name>
<proteinExistence type="inferred from homology"/>
<protein>
    <recommendedName>
        <fullName evidence="1">RNA pyrophosphohydrolase</fullName>
        <ecNumber evidence="1">3.6.1.-</ecNumber>
    </recommendedName>
    <alternativeName>
        <fullName evidence="1">(Di)nucleoside polyphosphate hydrolase</fullName>
    </alternativeName>
</protein>
<feature type="chain" id="PRO_1000115292" description="RNA pyrophosphohydrolase">
    <location>
        <begin position="1"/>
        <end position="176"/>
    </location>
</feature>
<feature type="domain" description="Nudix hydrolase" evidence="1">
    <location>
        <begin position="6"/>
        <end position="149"/>
    </location>
</feature>
<feature type="short sequence motif" description="Nudix box">
    <location>
        <begin position="38"/>
        <end position="59"/>
    </location>
</feature>
<reference key="1">
    <citation type="journal article" date="2011" name="J. Bacteriol.">
        <title>Comparative genomics of 28 Salmonella enterica isolates: evidence for CRISPR-mediated adaptive sublineage evolution.</title>
        <authorList>
            <person name="Fricke W.F."/>
            <person name="Mammel M.K."/>
            <person name="McDermott P.F."/>
            <person name="Tartera C."/>
            <person name="White D.G."/>
            <person name="Leclerc J.E."/>
            <person name="Ravel J."/>
            <person name="Cebula T.A."/>
        </authorList>
    </citation>
    <scope>NUCLEOTIDE SEQUENCE [LARGE SCALE GENOMIC DNA]</scope>
    <source>
        <strain>CT_02021853</strain>
    </source>
</reference>
<organism>
    <name type="scientific">Salmonella dublin (strain CT_02021853)</name>
    <dbReference type="NCBI Taxonomy" id="439851"/>
    <lineage>
        <taxon>Bacteria</taxon>
        <taxon>Pseudomonadati</taxon>
        <taxon>Pseudomonadota</taxon>
        <taxon>Gammaproteobacteria</taxon>
        <taxon>Enterobacterales</taxon>
        <taxon>Enterobacteriaceae</taxon>
        <taxon>Salmonella</taxon>
    </lineage>
</organism>
<dbReference type="EC" id="3.6.1.-" evidence="1"/>
<dbReference type="EMBL" id="CP001144">
    <property type="protein sequence ID" value="ACH75177.1"/>
    <property type="molecule type" value="Genomic_DNA"/>
</dbReference>
<dbReference type="RefSeq" id="WP_000564481.1">
    <property type="nucleotide sequence ID" value="NC_011205.1"/>
</dbReference>
<dbReference type="SMR" id="B5FUB2"/>
<dbReference type="KEGG" id="sed:SeD_A3331"/>
<dbReference type="HOGENOM" id="CLU_087195_3_2_6"/>
<dbReference type="Proteomes" id="UP000008322">
    <property type="component" value="Chromosome"/>
</dbReference>
<dbReference type="GO" id="GO:0005737">
    <property type="term" value="C:cytoplasm"/>
    <property type="evidence" value="ECO:0007669"/>
    <property type="project" value="TreeGrafter"/>
</dbReference>
<dbReference type="GO" id="GO:0034353">
    <property type="term" value="F:mRNA 5'-diphosphatase activity"/>
    <property type="evidence" value="ECO:0007669"/>
    <property type="project" value="TreeGrafter"/>
</dbReference>
<dbReference type="GO" id="GO:0006402">
    <property type="term" value="P:mRNA catabolic process"/>
    <property type="evidence" value="ECO:0007669"/>
    <property type="project" value="TreeGrafter"/>
</dbReference>
<dbReference type="CDD" id="cd03671">
    <property type="entry name" value="NUDIX_Ap4A_hydrolase_plant_like"/>
    <property type="match status" value="1"/>
</dbReference>
<dbReference type="FunFam" id="3.90.79.10:FF:000001">
    <property type="entry name" value="RNA pyrophosphohydrolase"/>
    <property type="match status" value="1"/>
</dbReference>
<dbReference type="Gene3D" id="3.90.79.10">
    <property type="entry name" value="Nucleoside Triphosphate Pyrophosphohydrolase"/>
    <property type="match status" value="1"/>
</dbReference>
<dbReference type="HAMAP" id="MF_00298">
    <property type="entry name" value="Nudix_RppH"/>
    <property type="match status" value="1"/>
</dbReference>
<dbReference type="InterPro" id="IPR020476">
    <property type="entry name" value="Nudix_hydrolase"/>
</dbReference>
<dbReference type="InterPro" id="IPR015797">
    <property type="entry name" value="NUDIX_hydrolase-like_dom_sf"/>
</dbReference>
<dbReference type="InterPro" id="IPR020084">
    <property type="entry name" value="NUDIX_hydrolase_CS"/>
</dbReference>
<dbReference type="InterPro" id="IPR000086">
    <property type="entry name" value="NUDIX_hydrolase_dom"/>
</dbReference>
<dbReference type="InterPro" id="IPR022927">
    <property type="entry name" value="RppH"/>
</dbReference>
<dbReference type="NCBIfam" id="NF001934">
    <property type="entry name" value="PRK00714.1-1"/>
    <property type="match status" value="1"/>
</dbReference>
<dbReference type="NCBIfam" id="NF001937">
    <property type="entry name" value="PRK00714.1-4"/>
    <property type="match status" value="1"/>
</dbReference>
<dbReference type="NCBIfam" id="NF001938">
    <property type="entry name" value="PRK00714.1-5"/>
    <property type="match status" value="1"/>
</dbReference>
<dbReference type="PANTHER" id="PTHR23114">
    <property type="entry name" value="M7GPPPN-MRNA HYDROLASE"/>
    <property type="match status" value="1"/>
</dbReference>
<dbReference type="PANTHER" id="PTHR23114:SF17">
    <property type="entry name" value="M7GPPPN-MRNA HYDROLASE"/>
    <property type="match status" value="1"/>
</dbReference>
<dbReference type="Pfam" id="PF00293">
    <property type="entry name" value="NUDIX"/>
    <property type="match status" value="1"/>
</dbReference>
<dbReference type="PRINTS" id="PR00502">
    <property type="entry name" value="NUDIXFAMILY"/>
</dbReference>
<dbReference type="SUPFAM" id="SSF55811">
    <property type="entry name" value="Nudix"/>
    <property type="match status" value="1"/>
</dbReference>
<dbReference type="PROSITE" id="PS51462">
    <property type="entry name" value="NUDIX"/>
    <property type="match status" value="1"/>
</dbReference>
<dbReference type="PROSITE" id="PS00893">
    <property type="entry name" value="NUDIX_BOX"/>
    <property type="match status" value="1"/>
</dbReference>
<sequence>MIDDDGYRPNVGIVICNRQGQVMWARRFGQHSWQFPQGGINPGESAEQAMYRELFEEVGLSRKDVRILASTRNWLRYKLPKRLVRWDTKPVCIGQKQKWFLLQLMSADAEINMQTSSTPEFDGWRWVSYWYPVRQVVSFKRDVYRRVMKEFASVVMALQDNPPKLQSAPAYRRKRG</sequence>